<reference key="1">
    <citation type="journal article" date="1991" name="Science">
        <title>Recoverin: a calcium sensitive activator of retinal rod guanylate cyclase.</title>
        <authorList>
            <person name="Dizhoor A.M."/>
            <person name="Ray S."/>
            <person name="Kumar S."/>
            <person name="Niemi G."/>
            <person name="Spencer M."/>
            <person name="Brolley D."/>
            <person name="Walsh K.A."/>
            <person name="Philipov P.P."/>
            <person name="Hurley J.B."/>
            <person name="Stryer L."/>
        </authorList>
    </citation>
    <scope>NUCLEOTIDE SEQUENCE [MRNA]</scope>
    <scope>PROTEIN SEQUENCE OF 6-195</scope>
    <scope>FUNCTION</scope>
    <scope>SUBCELLULAR LOCATION</scope>
    <scope>TISSUE SPECIFICITY</scope>
    <source>
        <tissue>Retina</tissue>
    </source>
</reference>
<reference key="2">
    <citation type="journal article" date="1991" name="FEBS Lett.">
        <title>P26-calcium binding protein from bovine retinal photoreceptor cells.</title>
        <authorList>
            <person name="Kutuzov M.A."/>
            <person name="Shmukler B.E."/>
            <person name="Suslov O.N."/>
            <person name="Dergachev A.E."/>
            <person name="Zargarov A.A."/>
            <person name="Abdulaev N.G."/>
        </authorList>
    </citation>
    <scope>NUCLEOTIDE SEQUENCE [MRNA]</scope>
    <source>
        <tissue>Retina</tissue>
    </source>
</reference>
<reference key="3">
    <citation type="journal article" date="1992" name="Proc. Natl. Acad. Sci. U.S.A.">
        <title>Cloning, expression, and crystallization of recoverin, a calcium sensor in vision.</title>
        <authorList>
            <person name="Ray S."/>
            <person name="Zozulya S."/>
            <person name="Niemi G.A."/>
            <person name="Flaherty K.M."/>
            <person name="Brolley D."/>
            <person name="Dizhoor A.M."/>
            <person name="McKay D.B."/>
            <person name="Hurley J."/>
            <person name="Stryer L."/>
        </authorList>
    </citation>
    <scope>NUCLEOTIDE SEQUENCE [MRNA]</scope>
    <source>
        <tissue>Retina</tissue>
    </source>
</reference>
<reference key="4">
    <citation type="journal article" date="1991" name="EMBO J.">
        <title>A 26 kd calcium binding protein from bovine rod outer segments as modulator of photoreceptor guanylate cyclase.</title>
        <authorList>
            <person name="Lambrecht H.G."/>
            <person name="Koch K.W."/>
        </authorList>
    </citation>
    <scope>PROTEIN SEQUENCE OF 18-36</scope>
    <scope>FUNCTION</scope>
    <scope>SUBCELLULAR LOCATION</scope>
    <scope>TISSUE SPECIFICITY</scope>
    <source>
        <tissue>Retina</tissue>
    </source>
</reference>
<reference key="5">
    <citation type="journal article" date="1992" name="J. Biol. Chem.">
        <title>The NH2 terminus of retinal recoverin is acylated by a small family of fatty acids.</title>
        <authorList>
            <person name="Dizhoor A.M."/>
            <person name="Ericsson L.H."/>
            <person name="Johnson R.S."/>
            <person name="Kumar S."/>
            <person name="Olshevskaya E."/>
            <person name="Zozulya S."/>
            <person name="Neubert T.A."/>
            <person name="Stryer L."/>
            <person name="Hurley J.B."/>
            <person name="Walsh K.A."/>
        </authorList>
    </citation>
    <scope>MYRISTOYLATION AT GLY-2</scope>
</reference>
<reference key="6">
    <citation type="journal article" date="1992" name="Proc. Natl. Acad. Sci. U.S.A.">
        <title>Calcium-myristoyl protein switch.</title>
        <authorList>
            <person name="Zozulya S."/>
            <person name="Stryer L."/>
        </authorList>
    </citation>
    <scope>SUBCELLULAR LOCATION</scope>
    <scope>MYRISTOYLATION AT GLY-2</scope>
</reference>
<reference key="7">
    <citation type="journal article" date="1993" name="Science">
        <title>Role of the acylated amino terminus of recoverin in Ca(2+)-dependent membrane interaction.</title>
        <authorList>
            <person name="Dizhoor A.M."/>
            <person name="Chen C.-K."/>
            <person name="Olshevskaya E."/>
            <person name="Sinelnikova V.V."/>
            <person name="Phillipov P."/>
            <person name="Hurley J.B."/>
        </authorList>
    </citation>
    <scope>ROLE OF MYRISTOYLATION</scope>
    <scope>RETRACTED PAPER</scope>
</reference>
<reference key="8">
    <citation type="journal article" date="1993" name="Science">
        <title>Recoverin's role: conclusion withdrawn.</title>
        <authorList>
            <person name="Hurley J.B."/>
            <person name="Dizhoor A.M."/>
            <person name="Stryer L."/>
        </authorList>
    </citation>
    <scope>RETRACTION NOTICE OF PUBMED:8430337</scope>
</reference>
<reference key="9">
    <citation type="journal article" date="1993" name="J. Biol. Chem.">
        <title>Recoverin has S-modulin activity in frog rods.</title>
        <authorList>
            <person name="Kawamura S."/>
            <person name="Hisatomi O."/>
            <person name="Kayada S."/>
            <person name="Tokunaga F."/>
            <person name="Kuo C.-H."/>
        </authorList>
    </citation>
    <scope>FUNCTION</scope>
</reference>
<reference key="10">
    <citation type="journal article" date="2006" name="J. Biol. Chem.">
        <title>Recoverin binds exclusively to an amphipathic peptide at the N terminus of rhodopsin kinase, inhibiting rhodopsin phosphorylation without affecting catalytic activity of the kinase.</title>
        <authorList>
            <person name="Higgins M.K."/>
            <person name="Oprian D.D."/>
            <person name="Schertler G.F."/>
        </authorList>
    </citation>
    <scope>FUNCTION</scope>
    <scope>INTERACTION WITH GRK1</scope>
</reference>
<reference key="11">
    <citation type="journal article" date="2011" name="Biochem. J.">
        <title>Involvement of the recoverin C-terminal segment in recognition of the target enzyme rhodopsin kinase.</title>
        <authorList>
            <person name="Zernii E.Y."/>
            <person name="Komolov K.E."/>
            <person name="Permyakov S.E."/>
            <person name="Kolpakova T."/>
            <person name="Dell'orco D."/>
            <person name="Poetzsch A."/>
            <person name="Knyazeva E.L."/>
            <person name="Grigoriev I.I."/>
            <person name="Permyakov E.A."/>
            <person name="Senin I.I."/>
            <person name="Philippov P.P."/>
            <person name="Koch K.W."/>
        </authorList>
    </citation>
    <scope>FUNCTION</scope>
    <scope>INTERACTION WITH GRK1</scope>
    <scope>MUTAGENESIS OF PRO-190; GLN-191; LYS-192; VAL-193; 185-LEU--LYS-202; 187-GLN--LYS-202; 188-PHE--LYS-202; 189-GLU--LYS-202; 191-GLN--LYS-202; 193-VAL--LYS-202 AND 197-LEU--LYS-202</scope>
</reference>
<reference key="12">
    <citation type="journal article" date="2015" name="Free Radic. Biol. Med.">
        <title>Light-induced disulfide dimerization of recoverin under ex vivo and in vivo conditions.</title>
        <authorList>
            <person name="Zernii E.Y."/>
            <person name="Nazipova A.A."/>
            <person name="Gancharova O.S."/>
            <person name="Kazakov A.S."/>
            <person name="Serebryakova M.V."/>
            <person name="Zinchenko D.V."/>
            <person name="Tikhomirova N.K."/>
            <person name="Senin I.I."/>
            <person name="Philippov P.P."/>
            <person name="Permyakov E.A."/>
            <person name="Permyakov S.E."/>
        </authorList>
    </citation>
    <scope>IDENTIFICATION BY MASS SPECTROMETRY</scope>
    <scope>SUBUNIT</scope>
    <scope>TISSUE SPECIFICITY</scope>
    <scope>OXIDATION</scope>
</reference>
<reference key="13">
    <citation type="journal article" date="1993" name="Cell">
        <title>Three-dimensional structure of recoverin, a calcium sensor in vision.</title>
        <authorList>
            <person name="Flaherty K.M."/>
            <person name="Zozulya S."/>
            <person name="Stryer L."/>
            <person name="McKay D.B."/>
        </authorList>
    </citation>
    <scope>X-RAY CRYSTALLOGRAPHY (1.90 ANGSTROMS) OF 2-202 IN COMPLEX WITH CALCIUM</scope>
    <scope>DOMAIN</scope>
</reference>
<reference key="14">
    <citation type="journal article" date="1995" name="Nature">
        <title>Sequestration of the membrane-targeting myristoyl group of recoverin in the calcium-free state.</title>
        <authorList>
            <person name="Tanaka T."/>
            <person name="Ames J.B."/>
            <person name="Harvey T.S."/>
            <person name="Stryer L."/>
            <person name="Ikura M."/>
        </authorList>
    </citation>
    <scope>STRUCTURE BY NMR OF 2-202 IN COMPLEX WITH CALCIUM</scope>
    <scope>DOMAIN</scope>
    <scope>MYRISTOYLATION AT GLY-2</scope>
</reference>
<reference evidence="22" key="15">
    <citation type="journal article" date="1997" name="Nature">
        <title>Molecular mechanics of calcium-myristoyl switches.</title>
        <authorList>
            <person name="Ames J.B."/>
            <person name="Ishima R."/>
            <person name="Tanaka T."/>
            <person name="Gordon J.I."/>
            <person name="Stryer L."/>
            <person name="Ikura M."/>
        </authorList>
    </citation>
    <scope>STRUCTURE BY NMR OF 2-202</scope>
</reference>
<reference evidence="23" key="16">
    <citation type="journal article" date="2002" name="Biochemistry">
        <title>Structure and calcium-binding studies of a recoverin mutant (E85Q) in an allosteric intermediate state.</title>
        <authorList>
            <person name="Ames J.B."/>
            <person name="Hamasaki N."/>
            <person name="Molchanova T."/>
        </authorList>
    </citation>
    <scope>STRUCTURE BY NMR OF 2-202 IN COMPLEX WITH CALCIUM</scope>
    <scope>DOMAIN</scope>
    <scope>MYRISTOYLATION</scope>
    <scope>MUTAGENESIS OF GLU-85</scope>
</reference>
<reference evidence="24 25" key="17">
    <citation type="journal article" date="2003" name="J. Biol. Chem.">
        <title>Impact of N-terminal myristoylation on the Ca2+-dependent conformational transition in recoverin.</title>
        <authorList>
            <person name="Weiergraeber O.H."/>
            <person name="Senin I.I."/>
            <person name="Philippov P.P."/>
            <person name="Granzin J."/>
            <person name="Koch K.W."/>
        </authorList>
    </citation>
    <scope>X-RAY CRYSTALLOGRAPHY (1.50 ANGSTROMS) OF 2-202 IN COMPLEX WITH CALCIUM</scope>
    <scope>FUNCTION</scope>
    <scope>DOMAIN</scope>
    <scope>MYRISTOYLATION</scope>
    <scope>MUTAGENESIS OF GLU-85</scope>
</reference>
<reference evidence="28" key="18">
    <citation type="journal article" date="2006" name="J. Biol. Chem.">
        <title>Structural basis for calcium-induced inhibition of rhodopsin kinase by recoverin.</title>
        <authorList>
            <person name="Ames J.B."/>
            <person name="Levay K."/>
            <person name="Wingard J.N."/>
            <person name="Lusin J.D."/>
            <person name="Slepak V.Z."/>
        </authorList>
    </citation>
    <scope>STRUCTURE BY NMR IN COMPLEX WITH CALCIUM AND GRK1 PEPTIDE</scope>
    <scope>INTERACTION WITH RHO</scope>
</reference>
<reference evidence="27" key="19">
    <citation type="journal article" date="2006" name="J. Biol. Chem.">
        <title>Tuning of a neuronal calcium sensor.</title>
        <authorList>
            <person name="Weiergraber O.H."/>
            <person name="Senin I.I."/>
            <person name="Zernii E.Y."/>
            <person name="Churumova V.A."/>
            <person name="Kovaleva N.A."/>
            <person name="Nazipova A.A."/>
            <person name="Permyakov S.E."/>
            <person name="Permyakov E.A."/>
            <person name="Philippov P.P."/>
            <person name="Granzin J."/>
            <person name="Koch K.W."/>
        </authorList>
    </citation>
    <scope>X-RAY CRYSTALLOGRAPHY (3.00 ANGSTROMS) OF 2-190 IN COMPLEX WITH CALCIUM</scope>
    <scope>FUNCTION</scope>
    <scope>SUBCELLULAR LOCATION</scope>
    <scope>MUTAGENESIS OF 191-GLN--LEU-202</scope>
</reference>
<reference evidence="29 30 31 32" key="20">
    <citation type="journal article" date="2013" name="J. Biol. Chem.">
        <title>A highly conserved cysteine of neuronal calcium-sensing proteins controls cooperative binding of Ca2+ to recoverin.</title>
        <authorList>
            <person name="Ranaghan M.J."/>
            <person name="Kumar R.P."/>
            <person name="Chakrabarti K.S."/>
            <person name="Buosi V."/>
            <person name="Kern D."/>
            <person name="Oprian D.D."/>
        </authorList>
    </citation>
    <scope>X-RAY CRYSTALLOGRAPHY (1.45 ANGSTROMS) OF 2-202 IN COMPLEX WITH CALCIUM</scope>
    <scope>INTERACTION WITH GRK1</scope>
    <scope>DOMAIN</scope>
    <scope>OXIDATION AT CYS-39</scope>
    <scope>MUTAGENESIS OF CYS-39 AND PRO-40</scope>
</reference>
<reference evidence="33 34" key="21">
    <citation type="journal article" date="2015" name="Biochemistry">
        <title>Crystal Structure of Recoverin with Calcium Ions Bound to Both Functional EF Hands.</title>
        <authorList>
            <person name="Kumar R.P."/>
            <person name="Ranaghan M.J."/>
            <person name="Ganjei A.Y."/>
            <person name="Oprian D.D."/>
        </authorList>
    </citation>
    <scope>X-RAY CRYSTALLOGRAPHY (1.20 ANGSTROMS) OF 2-202 IN COMPLEX WITH CALCIUM</scope>
    <scope>INTERACTION WITH GRK1</scope>
    <scope>DOMAIN</scope>
    <scope>MUTAGENESIS OF GLU-153</scope>
</reference>
<comment type="function">
    <text evidence="1 4 7 8 9 10 12 18">Acts as a calcium sensor and regulates phototransduction of cone and rod photoreceptor cells (PubMed:1672047, PubMed:1672637). Modulates light sensitivity of cone photoreceptor in dark and dim conditions (By similarity). In response to high Ca(2+) levels induced by low light levels, prolongs RHO/rhodopsin activation in rod photoreceptor cells by binding to and inhibiting GRK1-mediated phosphorylation of RHO/rhodopsin (PubMed:12686556, PubMed:16675451, PubMed:1672047, PubMed:1672637, PubMed:17015448, PubMed:21299498, PubMed:8392055). Plays a role in scotopic vision/enhances vision in dim light by enhancing signal transfer between rod photoreceptors and rod bipolar cells (By similarity). Improves rod photoreceptor sensitivity in dim light and mediates response of rod photoreceptors to facilitate detection of change and motion in bright light (By similarity).</text>
</comment>
<comment type="subunit">
    <text evidence="7 11 12 13 14 15">Homodimer; disulfide-linked (PubMed:25772009). Homodimerization is caused by prolonged intense illumination (PubMed:25772009). May form a complex composed of RHO, GRK1 and RCVRN in a Ca(2+)-dependent manner; RCVRN prevents the interaction between GRK1 and RHO (PubMed:17020884). Interacts (via C-terminus) with GRK1 (via N-terminus); the interaction is Ca(2+)-dependent (PubMed:16675451, PubMed:21299498, PubMed:24189072, PubMed:26584024).</text>
</comment>
<comment type="interaction">
    <interactant intactId="EBI-8592784">
        <id>P21457</id>
    </interactant>
    <interactant intactId="EBI-7865560">
        <id>P28327</id>
        <label>GRK1</label>
    </interactant>
    <organismsDiffer>false</organismsDiffer>
    <experiments>2</experiments>
</comment>
<comment type="subcellular location">
    <subcellularLocation>
        <location evidence="8">Photoreceptor inner segment</location>
    </subcellularLocation>
    <subcellularLocation>
        <location evidence="6 8 9 10">Cell projection</location>
        <location evidence="6 8 9 10">Cilium</location>
        <location evidence="6 8 9 10">Photoreceptor outer segment</location>
    </subcellularLocation>
    <subcellularLocation>
        <location evidence="6">Photoreceptor outer segment membrane</location>
        <topology evidence="6">Lipid-anchor</topology>
        <orientation evidence="6">Cytoplasmic side</orientation>
    </subcellularLocation>
    <subcellularLocation>
        <location evidence="1">Perikaryon</location>
    </subcellularLocation>
    <text evidence="1 10">Primarily expressed in the inner segments of light-adapted rod photoreceptors, approximately 10% of which translocates from photoreceptor outer segments upon light stimulation (By similarity). Targeting of myristoylated protein to rod photoreceptor outer segments is calcium dependent (PubMed:17015448).</text>
</comment>
<comment type="tissue specificity">
    <text evidence="8 9 14">Expressed in the retina (at protein level) (PubMed:1672047, PubMed:1672637, PubMed:25772009). Expressed in the pineal gland (at protein level) (PubMed:1672047).</text>
</comment>
<comment type="domain">
    <text evidence="3 4 13 15 16 20 21">EF-hand 2 and EF-hand 3 domains are the low-affinity and the high-affinity calcium binding sites, respectively (PubMed:11980481, PubMed:26584024). EF-hand 1 and EF-hand 4 domains do not bind calcium due to substitutions that disrupt their respective Ca(2+) binding loops (Probable). The cooperative binding of calcium to the EF-hand 2 domain following EF-hand 3 domain calcium binding requires myristoylation (PubMed:12686556, PubMed:24189072). Calcium binding to the 2 EF-hand domains induces exposure of the myristoyl group through a protein conformation change, this process known as the calcium-myristoyl switch facilitates binding to photoreceptor cell membranes (PubMed:7630423).</text>
</comment>
<comment type="PTM">
    <text evidence="3 4 5 6 16">The N-terminal glycine is linked to one of four different types of acyl groups. The most abundant is myristoleate (14:1), but 14:0, 14:2, and 12:0 acyl residues are also present (PubMed:11980481, PubMed:12686556, PubMed:1386601, PubMed:1454850). The Ca(2+) induced exposure of the myristoyl group, known as the calcium-myristoyl switch, promotes RCVRN binding to the photoreceptor cell membranes only when intracellular Ca(2+) concentration is high (PubMed:7630423).</text>
</comment>
<comment type="PTM">
    <text evidence="14">Oxidation on Cys-39 occurs in response to prolonged intense illumination and results in the formation of disulfide homodimers, and to a lesser extent disulfide-linked heterodimers.</text>
</comment>
<comment type="similarity">
    <text evidence="19">Belongs to the recoverin family.</text>
</comment>
<proteinExistence type="evidence at protein level"/>
<gene>
    <name type="primary">RCVRN</name>
    <name type="synonym">RCV1</name>
</gene>
<dbReference type="EMBL" id="M95858">
    <property type="protein sequence ID" value="AAB59256.1"/>
    <property type="molecule type" value="mRNA"/>
</dbReference>
<dbReference type="EMBL" id="X63322">
    <property type="protein sequence ID" value="CAA44928.1"/>
    <property type="molecule type" value="mRNA"/>
</dbReference>
<dbReference type="PIR" id="A46129">
    <property type="entry name" value="A46129"/>
</dbReference>
<dbReference type="RefSeq" id="NP_776590.1">
    <property type="nucleotide sequence ID" value="NM_174165.2"/>
</dbReference>
<dbReference type="PDB" id="1IKU">
    <property type="method" value="NMR"/>
    <property type="chains" value="A=2-202"/>
</dbReference>
<dbReference type="PDB" id="1JSA">
    <property type="method" value="NMR"/>
    <property type="chains" value="A=2-202"/>
</dbReference>
<dbReference type="PDB" id="1LA3">
    <property type="method" value="NMR"/>
    <property type="chains" value="A=2-202"/>
</dbReference>
<dbReference type="PDB" id="1OMR">
    <property type="method" value="X-ray"/>
    <property type="resolution" value="1.50 A"/>
    <property type="chains" value="A=2-202"/>
</dbReference>
<dbReference type="PDB" id="1OMV">
    <property type="method" value="X-ray"/>
    <property type="resolution" value="1.90 A"/>
    <property type="chains" value="A=2-202"/>
</dbReference>
<dbReference type="PDB" id="1REC">
    <property type="method" value="X-ray"/>
    <property type="resolution" value="1.90 A"/>
    <property type="chains" value="A=2-202"/>
</dbReference>
<dbReference type="PDB" id="2HET">
    <property type="method" value="X-ray"/>
    <property type="resolution" value="3.00 A"/>
    <property type="chains" value="A/B/C/D=2-190"/>
</dbReference>
<dbReference type="PDB" id="2I94">
    <property type="method" value="NMR"/>
    <property type="chains" value="A=1-202"/>
</dbReference>
<dbReference type="PDB" id="4M2O">
    <property type="method" value="X-ray"/>
    <property type="resolution" value="1.50 A"/>
    <property type="chains" value="A=2-197"/>
</dbReference>
<dbReference type="PDB" id="4M2P">
    <property type="method" value="X-ray"/>
    <property type="resolution" value="1.45 A"/>
    <property type="chains" value="A=2-202"/>
</dbReference>
<dbReference type="PDB" id="4M2Q">
    <property type="method" value="X-ray"/>
    <property type="resolution" value="1.90 A"/>
    <property type="chains" value="A=2-202"/>
</dbReference>
<dbReference type="PDB" id="4MLW">
    <property type="method" value="X-ray"/>
    <property type="resolution" value="1.45 A"/>
    <property type="chains" value="A=2-202"/>
</dbReference>
<dbReference type="PDB" id="4YI8">
    <property type="method" value="X-ray"/>
    <property type="resolution" value="1.20 A"/>
    <property type="chains" value="A=2-202"/>
</dbReference>
<dbReference type="PDB" id="4YI9">
    <property type="method" value="X-ray"/>
    <property type="resolution" value="1.35 A"/>
    <property type="chains" value="A=2-202"/>
</dbReference>
<dbReference type="PDBsum" id="1IKU"/>
<dbReference type="PDBsum" id="1JSA"/>
<dbReference type="PDBsum" id="1LA3"/>
<dbReference type="PDBsum" id="1OMR"/>
<dbReference type="PDBsum" id="1OMV"/>
<dbReference type="PDBsum" id="1REC"/>
<dbReference type="PDBsum" id="2HET"/>
<dbReference type="PDBsum" id="2I94"/>
<dbReference type="PDBsum" id="4M2O"/>
<dbReference type="PDBsum" id="4M2P"/>
<dbReference type="PDBsum" id="4M2Q"/>
<dbReference type="PDBsum" id="4MLW"/>
<dbReference type="PDBsum" id="4YI8"/>
<dbReference type="PDBsum" id="4YI9"/>
<dbReference type="BMRB" id="P21457"/>
<dbReference type="SMR" id="P21457"/>
<dbReference type="ELM" id="P21457"/>
<dbReference type="FunCoup" id="P21457">
    <property type="interactions" value="53"/>
</dbReference>
<dbReference type="IntAct" id="P21457">
    <property type="interactions" value="4"/>
</dbReference>
<dbReference type="MINT" id="P21457"/>
<dbReference type="STRING" id="9913.ENSBTAP00000034949"/>
<dbReference type="iPTMnet" id="P21457"/>
<dbReference type="PaxDb" id="9913-ENSBTAP00000034949"/>
<dbReference type="Ensembl" id="ENSBTAT00000035069.5">
    <property type="protein sequence ID" value="ENSBTAP00000034949.4"/>
    <property type="gene ID" value="ENSBTAG00000025088.5"/>
</dbReference>
<dbReference type="GeneID" id="281447"/>
<dbReference type="KEGG" id="bta:281447"/>
<dbReference type="CTD" id="5957"/>
<dbReference type="VEuPathDB" id="HostDB:ENSBTAG00000025088"/>
<dbReference type="VGNC" id="VGNC:33838">
    <property type="gene designation" value="RCVRN"/>
</dbReference>
<dbReference type="eggNOG" id="KOG0044">
    <property type="taxonomic scope" value="Eukaryota"/>
</dbReference>
<dbReference type="GeneTree" id="ENSGT00940000159441"/>
<dbReference type="HOGENOM" id="CLU_072366_1_0_1"/>
<dbReference type="InParanoid" id="P21457"/>
<dbReference type="OMA" id="WEFFGKK"/>
<dbReference type="OrthoDB" id="191686at2759"/>
<dbReference type="TreeFam" id="TF300009"/>
<dbReference type="Reactome" id="R-BTA-2514859">
    <property type="pathway name" value="Inactivation, recovery and regulation of the phototransduction cascade"/>
</dbReference>
<dbReference type="EvolutionaryTrace" id="P21457"/>
<dbReference type="Proteomes" id="UP000009136">
    <property type="component" value="Chromosome 19"/>
</dbReference>
<dbReference type="Bgee" id="ENSBTAG00000025088">
    <property type="expression patterns" value="Expressed in retina and 36 other cell types or tissues"/>
</dbReference>
<dbReference type="GO" id="GO:0005829">
    <property type="term" value="C:cytosol"/>
    <property type="evidence" value="ECO:0000304"/>
    <property type="project" value="Reactome"/>
</dbReference>
<dbReference type="GO" id="GO:0016020">
    <property type="term" value="C:membrane"/>
    <property type="evidence" value="ECO:0007669"/>
    <property type="project" value="UniProtKB-KW"/>
</dbReference>
<dbReference type="GO" id="GO:0043204">
    <property type="term" value="C:perikaryon"/>
    <property type="evidence" value="ECO:0007669"/>
    <property type="project" value="UniProtKB-SubCell"/>
</dbReference>
<dbReference type="GO" id="GO:0001917">
    <property type="term" value="C:photoreceptor inner segment"/>
    <property type="evidence" value="ECO:0007669"/>
    <property type="project" value="UniProtKB-SubCell"/>
</dbReference>
<dbReference type="GO" id="GO:0001750">
    <property type="term" value="C:photoreceptor outer segment"/>
    <property type="evidence" value="ECO:0007669"/>
    <property type="project" value="UniProtKB-SubCell"/>
</dbReference>
<dbReference type="GO" id="GO:0005509">
    <property type="term" value="F:calcium ion binding"/>
    <property type="evidence" value="ECO:0000318"/>
    <property type="project" value="GO_Central"/>
</dbReference>
<dbReference type="GO" id="GO:0007602">
    <property type="term" value="P:phototransduction"/>
    <property type="evidence" value="ECO:0007669"/>
    <property type="project" value="Ensembl"/>
</dbReference>
<dbReference type="GO" id="GO:0051924">
    <property type="term" value="P:regulation of calcium ion transport"/>
    <property type="evidence" value="ECO:0007669"/>
    <property type="project" value="Ensembl"/>
</dbReference>
<dbReference type="GO" id="GO:0009966">
    <property type="term" value="P:regulation of signal transduction"/>
    <property type="evidence" value="ECO:0000318"/>
    <property type="project" value="GO_Central"/>
</dbReference>
<dbReference type="GO" id="GO:0007601">
    <property type="term" value="P:visual perception"/>
    <property type="evidence" value="ECO:0007669"/>
    <property type="project" value="UniProtKB-KW"/>
</dbReference>
<dbReference type="CDD" id="cd00051">
    <property type="entry name" value="EFh"/>
    <property type="match status" value="2"/>
</dbReference>
<dbReference type="FunFam" id="1.10.238.10:FF:000009">
    <property type="entry name" value="Visinin-like protein 1"/>
    <property type="match status" value="1"/>
</dbReference>
<dbReference type="Gene3D" id="1.10.238.10">
    <property type="entry name" value="EF-hand"/>
    <property type="match status" value="2"/>
</dbReference>
<dbReference type="InterPro" id="IPR011992">
    <property type="entry name" value="EF-hand-dom_pair"/>
</dbReference>
<dbReference type="InterPro" id="IPR018247">
    <property type="entry name" value="EF_Hand_1_Ca_BS"/>
</dbReference>
<dbReference type="InterPro" id="IPR002048">
    <property type="entry name" value="EF_hand_dom"/>
</dbReference>
<dbReference type="InterPro" id="IPR028846">
    <property type="entry name" value="Recoverin"/>
</dbReference>
<dbReference type="PANTHER" id="PTHR23055">
    <property type="entry name" value="CALCIUM BINDING PROTEINS"/>
    <property type="match status" value="1"/>
</dbReference>
<dbReference type="PANTHER" id="PTHR23055:SF20">
    <property type="entry name" value="RECOVERIN"/>
    <property type="match status" value="1"/>
</dbReference>
<dbReference type="Pfam" id="PF13499">
    <property type="entry name" value="EF-hand_7"/>
    <property type="match status" value="1"/>
</dbReference>
<dbReference type="Pfam" id="PF13833">
    <property type="entry name" value="EF-hand_8"/>
    <property type="match status" value="1"/>
</dbReference>
<dbReference type="PRINTS" id="PR00450">
    <property type="entry name" value="RECOVERIN"/>
</dbReference>
<dbReference type="SMART" id="SM00054">
    <property type="entry name" value="EFh"/>
    <property type="match status" value="2"/>
</dbReference>
<dbReference type="SUPFAM" id="SSF47473">
    <property type="entry name" value="EF-hand"/>
    <property type="match status" value="1"/>
</dbReference>
<dbReference type="PROSITE" id="PS00018">
    <property type="entry name" value="EF_HAND_1"/>
    <property type="match status" value="2"/>
</dbReference>
<dbReference type="PROSITE" id="PS50222">
    <property type="entry name" value="EF_HAND_2"/>
    <property type="match status" value="4"/>
</dbReference>
<sequence length="202" mass="23333">MGNSKSGALSKEILEELQLNTKFTEEELSSWYQSFLKECPSGRITRQEFQTIYSKFFPEADPKAYAQHVFRSFDANSDGTLDFKEYVIALHMTSAGKTNQKLEWAFSLYDVDGNGTISKNEVLEIVTAIFKMISPEDTKHLPEDENTPEKRAEKIWGFFGKKDDDKLTEKEFIEGTLANKEILRLIQFEPQKVKEKLKEKKL</sequence>
<feature type="initiator methionine" description="Removed" evidence="3 4 5 6 16">
    <location>
        <position position="1"/>
    </location>
</feature>
<feature type="chain" id="PRO_0000073758" description="Recoverin">
    <location>
        <begin position="2"/>
        <end position="202"/>
    </location>
</feature>
<feature type="domain" description="EF-hand 1" evidence="2">
    <location>
        <begin position="24"/>
        <end position="59"/>
    </location>
</feature>
<feature type="domain" description="EF-hand 2" evidence="2">
    <location>
        <begin position="61"/>
        <end position="96"/>
    </location>
</feature>
<feature type="domain" description="EF-hand 3" evidence="2">
    <location>
        <begin position="97"/>
        <end position="132"/>
    </location>
</feature>
<feature type="domain" description="EF-hand 4" evidence="2">
    <location>
        <begin position="147"/>
        <end position="182"/>
    </location>
</feature>
<feature type="region of interest" description="Interaction with GRK1" evidence="12">
    <location>
        <begin position="189"/>
        <end position="192"/>
    </location>
</feature>
<feature type="region of interest" description="Modulates EF-hand 3 domain calcium binding affinity" evidence="10">
    <location>
        <begin position="191"/>
        <end position="202"/>
    </location>
</feature>
<feature type="binding site" evidence="2 3 33">
    <location>
        <position position="74"/>
    </location>
    <ligand>
        <name>Ca(2+)</name>
        <dbReference type="ChEBI" id="CHEBI:29108"/>
        <label>1</label>
        <note>low affinity</note>
    </ligand>
</feature>
<feature type="binding site" evidence="2 3 33">
    <location>
        <position position="76"/>
    </location>
    <ligand>
        <name>Ca(2+)</name>
        <dbReference type="ChEBI" id="CHEBI:29108"/>
        <label>1</label>
        <note>low affinity</note>
    </ligand>
</feature>
<feature type="binding site" evidence="2 3 33">
    <location>
        <position position="78"/>
    </location>
    <ligand>
        <name>Ca(2+)</name>
        <dbReference type="ChEBI" id="CHEBI:29108"/>
        <label>1</label>
        <note>low affinity</note>
    </ligand>
</feature>
<feature type="binding site" evidence="2 3 33">
    <location>
        <position position="80"/>
    </location>
    <ligand>
        <name>Ca(2+)</name>
        <dbReference type="ChEBI" id="CHEBI:29108"/>
        <label>1</label>
        <note>low affinity</note>
    </ligand>
</feature>
<feature type="binding site" evidence="2 3 33">
    <location>
        <position position="85"/>
    </location>
    <ligand>
        <name>Ca(2+)</name>
        <dbReference type="ChEBI" id="CHEBI:29108"/>
        <label>1</label>
        <note>low affinity</note>
    </ligand>
</feature>
<feature type="binding site" evidence="2 3 4 10 11 13 15 16 17 24 25 26 27 28 29 30 31 32 33 34">
    <location>
        <position position="110"/>
    </location>
    <ligand>
        <name>Ca(2+)</name>
        <dbReference type="ChEBI" id="CHEBI:29108"/>
        <label>2</label>
        <note>high affinity</note>
    </ligand>
</feature>
<feature type="binding site" evidence="2 3 4 10 11 13 15 16 17 25 26 27 28 29 30 31 32 33 34">
    <location>
        <position position="112"/>
    </location>
    <ligand>
        <name>Ca(2+)</name>
        <dbReference type="ChEBI" id="CHEBI:29108"/>
        <label>2</label>
        <note>high affinity</note>
    </ligand>
</feature>
<feature type="binding site" evidence="2 3 4 11 13 15 16 17 24 25 26 28 29 30 31 32 33 34">
    <location>
        <position position="114"/>
    </location>
    <ligand>
        <name>Ca(2+)</name>
        <dbReference type="ChEBI" id="CHEBI:29108"/>
        <label>2</label>
        <note>high affinity</note>
    </ligand>
</feature>
<feature type="binding site" evidence="2 3 4 10 11 13 15 16 17 24 25 26 27 28 29 30 32 33 34">
    <location>
        <position position="116"/>
    </location>
    <ligand>
        <name>Ca(2+)</name>
        <dbReference type="ChEBI" id="CHEBI:29108"/>
        <label>2</label>
        <note>high affinity</note>
    </ligand>
</feature>
<feature type="binding site" evidence="2 3 4 10 11 13 15 16 24 25 27 28 29 30 31 32 33">
    <location>
        <position position="121"/>
    </location>
    <ligand>
        <name>Ca(2+)</name>
        <dbReference type="ChEBI" id="CHEBI:29108"/>
        <label>2</label>
        <note>high affinity</note>
    </ligand>
</feature>
<feature type="site" description="Interaction with GRK1" evidence="12">
    <location>
        <position position="192"/>
    </location>
</feature>
<feature type="modified residue" description="Cysteine sulfenic acid (-SOH)" evidence="13 14">
    <location>
        <position position="39"/>
    </location>
</feature>
<feature type="lipid moiety-binding region" description="N-myristoyl glycine" evidence="3 5 16">
    <location>
        <position position="2"/>
    </location>
</feature>
<feature type="disulfide bond" description="Interchain, redox-active" evidence="14">
    <location>
        <position position="39"/>
    </location>
</feature>
<feature type="mutagenesis site" description="Increases calcium binding affinity at EF-hand 3 domain; induces co-operative calcium binding in non-myristoylated protein." evidence="13">
    <original>C</original>
    <variation>A</variation>
    <location>
        <position position="39"/>
    </location>
</feature>
<feature type="mutagenesis site" description="Reduces binding affinity for calcium at both EF-hand 2 and EF-hand 3 domains. Abolishes interaction with GRK1." evidence="13">
    <original>C</original>
    <variation>D</variation>
    <location>
        <position position="39"/>
    </location>
</feature>
<feature type="mutagenesis site" description="Reduces calcium binding affinity." evidence="13">
    <original>P</original>
    <variation>A</variation>
    <location>
        <position position="40"/>
    </location>
</feature>
<feature type="mutagenesis site" description="Abolishes binding of calcium to EF-hand 2 domain. Abolishes calcium-dependent inhibition of GRK1." evidence="3 4">
    <original>E</original>
    <variation>Q</variation>
    <location>
        <position position="85"/>
    </location>
</feature>
<feature type="mutagenesis site" description="No effect on calcium binding to EF-hand 2 and EF-hand 3 domains. No effect on interaction with GRK1." evidence="15">
    <original>E</original>
    <variation>A</variation>
    <location>
        <position position="153"/>
    </location>
</feature>
<feature type="mutagenesis site" description="Decrease in thermostability." evidence="12">
    <location>
        <begin position="185"/>
        <end position="202"/>
    </location>
</feature>
<feature type="mutagenesis site" description="Decrease in thermostability." evidence="12">
    <location>
        <begin position="187"/>
        <end position="202"/>
    </location>
</feature>
<feature type="mutagenesis site" description="Decrease in thermostability." evidence="12">
    <location>
        <begin position="188"/>
        <end position="202"/>
    </location>
</feature>
<feature type="mutagenesis site" description="Reduces calcium binding affinity. Reduces interaction with GRK1. Reduces inhibition of GRK1 activity." evidence="12">
    <location>
        <begin position="189"/>
        <end position="202"/>
    </location>
</feature>
<feature type="mutagenesis site" description="Reduces interaction with GRK1." evidence="12">
    <original>P</original>
    <variation>G</variation>
    <location>
        <position position="190"/>
    </location>
</feature>
<feature type="mutagenesis site" description="Reduces calcium binding affinity to EF-hand 3 domain. Reduces interaction with GRK1." evidence="10 12">
    <location>
        <begin position="191"/>
        <end position="202"/>
    </location>
</feature>
<feature type="mutagenesis site" description="Reduces inhibition of GRK1 activity." evidence="12">
    <original>Q</original>
    <variation>A</variation>
    <location>
        <position position="191"/>
    </location>
</feature>
<feature type="mutagenesis site" description="Reduces interaction with GRK1. Reduces inhibition of GRK1 activity." evidence="12">
    <original>K</original>
    <variation>A</variation>
    <location>
        <position position="192"/>
    </location>
</feature>
<feature type="mutagenesis site" description="Reduces calcium binding affinity. Reduces interaction with GRK1." evidence="12">
    <location>
        <begin position="193"/>
        <end position="202"/>
    </location>
</feature>
<feature type="mutagenesis site" description="Reduces interaction with GRK1." evidence="12">
    <original>V</original>
    <variation>G</variation>
    <location>
        <position position="193"/>
    </location>
</feature>
<feature type="mutagenesis site" description="Reduces interaction with GRK1." evidence="12">
    <location>
        <begin position="197"/>
        <end position="202"/>
    </location>
</feature>
<feature type="sequence conflict" description="In Ref. 4; AA sequence." evidence="19" ref="4">
    <original>L</original>
    <variation>Q</variation>
    <location>
        <position position="19"/>
    </location>
</feature>
<feature type="sequence conflict" description="In Ref. 4; AA sequence." evidence="19" ref="4">
    <original>T</original>
    <variation>N</variation>
    <location>
        <position position="21"/>
    </location>
</feature>
<feature type="helix" evidence="38">
    <location>
        <begin position="11"/>
        <end position="20"/>
    </location>
</feature>
<feature type="helix" evidence="38">
    <location>
        <begin position="25"/>
        <end position="38"/>
    </location>
</feature>
<feature type="strand" evidence="39">
    <location>
        <begin position="42"/>
        <end position="45"/>
    </location>
</feature>
<feature type="helix" evidence="38">
    <location>
        <begin position="46"/>
        <end position="56"/>
    </location>
</feature>
<feature type="strand" evidence="36">
    <location>
        <begin position="58"/>
        <end position="60"/>
    </location>
</feature>
<feature type="helix" evidence="38">
    <location>
        <begin position="63"/>
        <end position="73"/>
    </location>
</feature>
<feature type="strand" evidence="38">
    <location>
        <begin position="78"/>
        <end position="81"/>
    </location>
</feature>
<feature type="helix" evidence="38">
    <location>
        <begin position="83"/>
        <end position="94"/>
    </location>
</feature>
<feature type="helix" evidence="38">
    <location>
        <begin position="98"/>
        <end position="100"/>
    </location>
</feature>
<feature type="helix" evidence="38">
    <location>
        <begin position="102"/>
        <end position="109"/>
    </location>
</feature>
<feature type="strand" evidence="38">
    <location>
        <begin position="114"/>
        <end position="117"/>
    </location>
</feature>
<feature type="helix" evidence="38">
    <location>
        <begin position="119"/>
        <end position="130"/>
    </location>
</feature>
<feature type="helix" evidence="38">
    <location>
        <begin position="135"/>
        <end position="138"/>
    </location>
</feature>
<feature type="strand" evidence="37">
    <location>
        <begin position="139"/>
        <end position="141"/>
    </location>
</feature>
<feature type="helix" evidence="38">
    <location>
        <begin position="143"/>
        <end position="145"/>
    </location>
</feature>
<feature type="helix" evidence="38">
    <location>
        <begin position="148"/>
        <end position="158"/>
    </location>
</feature>
<feature type="strand" evidence="35">
    <location>
        <begin position="162"/>
        <end position="164"/>
    </location>
</feature>
<feature type="strand" evidence="36">
    <location>
        <begin position="166"/>
        <end position="168"/>
    </location>
</feature>
<feature type="helix" evidence="38">
    <location>
        <begin position="169"/>
        <end position="178"/>
    </location>
</feature>
<feature type="helix" evidence="38">
    <location>
        <begin position="180"/>
        <end position="186"/>
    </location>
</feature>
<feature type="helix" evidence="38">
    <location>
        <begin position="190"/>
        <end position="196"/>
    </location>
</feature>
<evidence type="ECO:0000250" key="1">
    <source>
        <dbReference type="UniProtKB" id="P34057"/>
    </source>
</evidence>
<evidence type="ECO:0000255" key="2">
    <source>
        <dbReference type="PROSITE-ProRule" id="PRU00448"/>
    </source>
</evidence>
<evidence type="ECO:0000269" key="3">
    <source>
    </source>
</evidence>
<evidence type="ECO:0000269" key="4">
    <source>
    </source>
</evidence>
<evidence type="ECO:0000269" key="5">
    <source>
    </source>
</evidence>
<evidence type="ECO:0000269" key="6">
    <source>
    </source>
</evidence>
<evidence type="ECO:0000269" key="7">
    <source>
    </source>
</evidence>
<evidence type="ECO:0000269" key="8">
    <source>
    </source>
</evidence>
<evidence type="ECO:0000269" key="9">
    <source>
    </source>
</evidence>
<evidence type="ECO:0000269" key="10">
    <source>
    </source>
</evidence>
<evidence type="ECO:0000269" key="11">
    <source>
    </source>
</evidence>
<evidence type="ECO:0000269" key="12">
    <source>
    </source>
</evidence>
<evidence type="ECO:0000269" key="13">
    <source>
    </source>
</evidence>
<evidence type="ECO:0000269" key="14">
    <source>
    </source>
</evidence>
<evidence type="ECO:0000269" key="15">
    <source>
    </source>
</evidence>
<evidence type="ECO:0000269" key="16">
    <source>
    </source>
</evidence>
<evidence type="ECO:0000269" key="17">
    <source>
    </source>
</evidence>
<evidence type="ECO:0000269" key="18">
    <source>
    </source>
</evidence>
<evidence type="ECO:0000305" key="19"/>
<evidence type="ECO:0000305" key="20">
    <source>
    </source>
</evidence>
<evidence type="ECO:0000305" key="21">
    <source>
    </source>
</evidence>
<evidence type="ECO:0007744" key="22">
    <source>
        <dbReference type="PDB" id="1JSA"/>
    </source>
</evidence>
<evidence type="ECO:0007744" key="23">
    <source>
        <dbReference type="PDB" id="1LA3"/>
    </source>
</evidence>
<evidence type="ECO:0007744" key="24">
    <source>
        <dbReference type="PDB" id="1OMR"/>
    </source>
</evidence>
<evidence type="ECO:0007744" key="25">
    <source>
        <dbReference type="PDB" id="1OMV"/>
    </source>
</evidence>
<evidence type="ECO:0007744" key="26">
    <source>
        <dbReference type="PDB" id="1REC"/>
    </source>
</evidence>
<evidence type="ECO:0007744" key="27">
    <source>
        <dbReference type="PDB" id="2HET"/>
    </source>
</evidence>
<evidence type="ECO:0007744" key="28">
    <source>
        <dbReference type="PDB" id="2I94"/>
    </source>
</evidence>
<evidence type="ECO:0007744" key="29">
    <source>
        <dbReference type="PDB" id="4M2O"/>
    </source>
</evidence>
<evidence type="ECO:0007744" key="30">
    <source>
        <dbReference type="PDB" id="4M2P"/>
    </source>
</evidence>
<evidence type="ECO:0007744" key="31">
    <source>
        <dbReference type="PDB" id="4M2Q"/>
    </source>
</evidence>
<evidence type="ECO:0007744" key="32">
    <source>
        <dbReference type="PDB" id="4MLW"/>
    </source>
</evidence>
<evidence type="ECO:0007744" key="33">
    <source>
        <dbReference type="PDB" id="4YI8"/>
    </source>
</evidence>
<evidence type="ECO:0007744" key="34">
    <source>
        <dbReference type="PDB" id="4YI9"/>
    </source>
</evidence>
<evidence type="ECO:0007829" key="35">
    <source>
        <dbReference type="PDB" id="1IKU"/>
    </source>
</evidence>
<evidence type="ECO:0007829" key="36">
    <source>
        <dbReference type="PDB" id="1JSA"/>
    </source>
</evidence>
<evidence type="ECO:0007829" key="37">
    <source>
        <dbReference type="PDB" id="2HET"/>
    </source>
</evidence>
<evidence type="ECO:0007829" key="38">
    <source>
        <dbReference type="PDB" id="4YI8"/>
    </source>
</evidence>
<evidence type="ECO:0007829" key="39">
    <source>
        <dbReference type="PDB" id="4YI9"/>
    </source>
</evidence>
<accession>P21457</accession>
<name>RECO_BOVIN</name>
<organism>
    <name type="scientific">Bos taurus</name>
    <name type="common">Bovine</name>
    <dbReference type="NCBI Taxonomy" id="9913"/>
    <lineage>
        <taxon>Eukaryota</taxon>
        <taxon>Metazoa</taxon>
        <taxon>Chordata</taxon>
        <taxon>Craniata</taxon>
        <taxon>Vertebrata</taxon>
        <taxon>Euteleostomi</taxon>
        <taxon>Mammalia</taxon>
        <taxon>Eutheria</taxon>
        <taxon>Laurasiatheria</taxon>
        <taxon>Artiodactyla</taxon>
        <taxon>Ruminantia</taxon>
        <taxon>Pecora</taxon>
        <taxon>Bovidae</taxon>
        <taxon>Bovinae</taxon>
        <taxon>Bos</taxon>
    </lineage>
</organism>
<protein>
    <recommendedName>
        <fullName>Recoverin</fullName>
    </recommendedName>
    <alternativeName>
        <fullName>p26</fullName>
    </alternativeName>
</protein>
<keyword id="KW-0002">3D-structure</keyword>
<keyword id="KW-0106">Calcium</keyword>
<keyword id="KW-0966">Cell projection</keyword>
<keyword id="KW-0903">Direct protein sequencing</keyword>
<keyword id="KW-1015">Disulfide bond</keyword>
<keyword id="KW-0449">Lipoprotein</keyword>
<keyword id="KW-0472">Membrane</keyword>
<keyword id="KW-0479">Metal-binding</keyword>
<keyword id="KW-0519">Myristate</keyword>
<keyword id="KW-0558">Oxidation</keyword>
<keyword id="KW-0676">Redox-active center</keyword>
<keyword id="KW-1185">Reference proteome</keyword>
<keyword id="KW-0677">Repeat</keyword>
<keyword id="KW-0716">Sensory transduction</keyword>
<keyword id="KW-0844">Vision</keyword>